<organism>
    <name type="scientific">Pectobacterium atrosepticum (strain SCRI 1043 / ATCC BAA-672)</name>
    <name type="common">Erwinia carotovora subsp. atroseptica</name>
    <dbReference type="NCBI Taxonomy" id="218491"/>
    <lineage>
        <taxon>Bacteria</taxon>
        <taxon>Pseudomonadati</taxon>
        <taxon>Pseudomonadota</taxon>
        <taxon>Gammaproteobacteria</taxon>
        <taxon>Enterobacterales</taxon>
        <taxon>Pectobacteriaceae</taxon>
        <taxon>Pectobacterium</taxon>
    </lineage>
</organism>
<evidence type="ECO:0000255" key="1">
    <source>
        <dbReference type="HAMAP-Rule" id="MF_01693"/>
    </source>
</evidence>
<keyword id="KW-0093">Biotin biosynthesis</keyword>
<keyword id="KW-0663">Pyridoxal phosphate</keyword>
<keyword id="KW-1185">Reference proteome</keyword>
<keyword id="KW-0808">Transferase</keyword>
<reference key="1">
    <citation type="journal article" date="2004" name="Proc. Natl. Acad. Sci. U.S.A.">
        <title>Genome sequence of the enterobacterial phytopathogen Erwinia carotovora subsp. atroseptica and characterization of virulence factors.</title>
        <authorList>
            <person name="Bell K.S."/>
            <person name="Sebaihia M."/>
            <person name="Pritchard L."/>
            <person name="Holden M.T.G."/>
            <person name="Hyman L.J."/>
            <person name="Holeva M.C."/>
            <person name="Thomson N.R."/>
            <person name="Bentley S.D."/>
            <person name="Churcher L.J.C."/>
            <person name="Mungall K."/>
            <person name="Atkin R."/>
            <person name="Bason N."/>
            <person name="Brooks K."/>
            <person name="Chillingworth T."/>
            <person name="Clark K."/>
            <person name="Doggett J."/>
            <person name="Fraser A."/>
            <person name="Hance Z."/>
            <person name="Hauser H."/>
            <person name="Jagels K."/>
            <person name="Moule S."/>
            <person name="Norbertczak H."/>
            <person name="Ormond D."/>
            <person name="Price C."/>
            <person name="Quail M.A."/>
            <person name="Sanders M."/>
            <person name="Walker D."/>
            <person name="Whitehead S."/>
            <person name="Salmond G.P.C."/>
            <person name="Birch P.R.J."/>
            <person name="Parkhill J."/>
            <person name="Toth I.K."/>
        </authorList>
    </citation>
    <scope>NUCLEOTIDE SEQUENCE [LARGE SCALE GENOMIC DNA]</scope>
    <source>
        <strain>SCRI 1043 / ATCC BAA-672</strain>
    </source>
</reference>
<comment type="function">
    <text evidence="1">Catalyzes the decarboxylative condensation of pimeloyl-[acyl-carrier protein] and L-alanine to produce 8-amino-7-oxononanoate (AON), [acyl-carrier protein], and carbon dioxide.</text>
</comment>
<comment type="catalytic activity">
    <reaction evidence="1">
        <text>6-carboxyhexanoyl-[ACP] + L-alanine + H(+) = (8S)-8-amino-7-oxononanoate + holo-[ACP] + CO2</text>
        <dbReference type="Rhea" id="RHEA:42288"/>
        <dbReference type="Rhea" id="RHEA-COMP:9685"/>
        <dbReference type="Rhea" id="RHEA-COMP:9955"/>
        <dbReference type="ChEBI" id="CHEBI:15378"/>
        <dbReference type="ChEBI" id="CHEBI:16526"/>
        <dbReference type="ChEBI" id="CHEBI:57972"/>
        <dbReference type="ChEBI" id="CHEBI:64479"/>
        <dbReference type="ChEBI" id="CHEBI:78846"/>
        <dbReference type="ChEBI" id="CHEBI:149468"/>
        <dbReference type="EC" id="2.3.1.47"/>
    </reaction>
</comment>
<comment type="cofactor">
    <cofactor evidence="1">
        <name>pyridoxal 5'-phosphate</name>
        <dbReference type="ChEBI" id="CHEBI:597326"/>
    </cofactor>
</comment>
<comment type="pathway">
    <text evidence="1">Cofactor biosynthesis; biotin biosynthesis.</text>
</comment>
<comment type="subunit">
    <text evidence="1">Homodimer.</text>
</comment>
<comment type="similarity">
    <text evidence="1">Belongs to the class-II pyridoxal-phosphate-dependent aminotransferase family. BioF subfamily.</text>
</comment>
<feature type="chain" id="PRO_0000380988" description="8-amino-7-oxononanoate synthase">
    <location>
        <begin position="1"/>
        <end position="385"/>
    </location>
</feature>
<feature type="binding site" evidence="1">
    <location>
        <position position="21"/>
    </location>
    <ligand>
        <name>substrate</name>
    </ligand>
</feature>
<feature type="binding site" evidence="1">
    <location>
        <begin position="108"/>
        <end position="109"/>
    </location>
    <ligand>
        <name>pyridoxal 5'-phosphate</name>
        <dbReference type="ChEBI" id="CHEBI:597326"/>
    </ligand>
</feature>
<feature type="binding site" evidence="1">
    <location>
        <position position="133"/>
    </location>
    <ligand>
        <name>substrate</name>
    </ligand>
</feature>
<feature type="binding site" evidence="1">
    <location>
        <position position="179"/>
    </location>
    <ligand>
        <name>pyridoxal 5'-phosphate</name>
        <dbReference type="ChEBI" id="CHEBI:597326"/>
    </ligand>
</feature>
<feature type="binding site" evidence="1">
    <location>
        <position position="207"/>
    </location>
    <ligand>
        <name>pyridoxal 5'-phosphate</name>
        <dbReference type="ChEBI" id="CHEBI:597326"/>
    </ligand>
</feature>
<feature type="binding site" evidence="1">
    <location>
        <position position="233"/>
    </location>
    <ligand>
        <name>pyridoxal 5'-phosphate</name>
        <dbReference type="ChEBI" id="CHEBI:597326"/>
    </ligand>
</feature>
<feature type="binding site" evidence="1">
    <location>
        <position position="350"/>
    </location>
    <ligand>
        <name>substrate</name>
    </ligand>
</feature>
<feature type="modified residue" description="N6-(pyridoxal phosphate)lysine" evidence="1">
    <location>
        <position position="236"/>
    </location>
</feature>
<protein>
    <recommendedName>
        <fullName evidence="1">8-amino-7-oxononanoate synthase</fullName>
        <shortName evidence="1">AONS</shortName>
        <ecNumber evidence="1">2.3.1.47</ecNumber>
    </recommendedName>
    <alternativeName>
        <fullName evidence="1">7-keto-8-amino-pelargonic acid synthase</fullName>
        <shortName evidence="1">7-KAP synthase</shortName>
        <shortName evidence="1">KAPA synthase</shortName>
    </alternativeName>
    <alternativeName>
        <fullName evidence="1">8-amino-7-ketopelargonate synthase</fullName>
    </alternativeName>
</protein>
<accession>Q6D3C0</accession>
<dbReference type="EC" id="2.3.1.47" evidence="1"/>
<dbReference type="EMBL" id="BX950851">
    <property type="protein sequence ID" value="CAG75724.1"/>
    <property type="molecule type" value="Genomic_DNA"/>
</dbReference>
<dbReference type="RefSeq" id="WP_011094358.1">
    <property type="nucleotide sequence ID" value="NC_004547.2"/>
</dbReference>
<dbReference type="SMR" id="Q6D3C0"/>
<dbReference type="STRING" id="218491.ECA2824"/>
<dbReference type="GeneID" id="57208487"/>
<dbReference type="KEGG" id="eca:ECA2824"/>
<dbReference type="PATRIC" id="fig|218491.5.peg.2865"/>
<dbReference type="eggNOG" id="COG0156">
    <property type="taxonomic scope" value="Bacteria"/>
</dbReference>
<dbReference type="HOGENOM" id="CLU_015846_11_2_6"/>
<dbReference type="OrthoDB" id="9807157at2"/>
<dbReference type="UniPathway" id="UPA00078"/>
<dbReference type="Proteomes" id="UP000007966">
    <property type="component" value="Chromosome"/>
</dbReference>
<dbReference type="GO" id="GO:0008710">
    <property type="term" value="F:8-amino-7-oxononanoate synthase activity"/>
    <property type="evidence" value="ECO:0007669"/>
    <property type="project" value="UniProtKB-UniRule"/>
</dbReference>
<dbReference type="GO" id="GO:0030170">
    <property type="term" value="F:pyridoxal phosphate binding"/>
    <property type="evidence" value="ECO:0007669"/>
    <property type="project" value="UniProtKB-UniRule"/>
</dbReference>
<dbReference type="GO" id="GO:0009102">
    <property type="term" value="P:biotin biosynthetic process"/>
    <property type="evidence" value="ECO:0007669"/>
    <property type="project" value="UniProtKB-UniRule"/>
</dbReference>
<dbReference type="CDD" id="cd06454">
    <property type="entry name" value="KBL_like"/>
    <property type="match status" value="1"/>
</dbReference>
<dbReference type="Gene3D" id="3.90.1150.10">
    <property type="entry name" value="Aspartate Aminotransferase, domain 1"/>
    <property type="match status" value="1"/>
</dbReference>
<dbReference type="Gene3D" id="3.40.640.10">
    <property type="entry name" value="Type I PLP-dependent aspartate aminotransferase-like (Major domain)"/>
    <property type="match status" value="1"/>
</dbReference>
<dbReference type="HAMAP" id="MF_01693">
    <property type="entry name" value="BioF_aminotrans_2"/>
    <property type="match status" value="1"/>
</dbReference>
<dbReference type="InterPro" id="IPR001917">
    <property type="entry name" value="Aminotrans_II_pyridoxalP_BS"/>
</dbReference>
<dbReference type="InterPro" id="IPR004839">
    <property type="entry name" value="Aminotransferase_I/II_large"/>
</dbReference>
<dbReference type="InterPro" id="IPR050087">
    <property type="entry name" value="AON_synthase_class-II"/>
</dbReference>
<dbReference type="InterPro" id="IPR004723">
    <property type="entry name" value="AONS_Archaea/Proteobacteria"/>
</dbReference>
<dbReference type="InterPro" id="IPR022834">
    <property type="entry name" value="AONS_Proteobacteria"/>
</dbReference>
<dbReference type="InterPro" id="IPR015424">
    <property type="entry name" value="PyrdxlP-dep_Trfase"/>
</dbReference>
<dbReference type="InterPro" id="IPR015421">
    <property type="entry name" value="PyrdxlP-dep_Trfase_major"/>
</dbReference>
<dbReference type="InterPro" id="IPR015422">
    <property type="entry name" value="PyrdxlP-dep_Trfase_small"/>
</dbReference>
<dbReference type="NCBIfam" id="TIGR00858">
    <property type="entry name" value="bioF"/>
    <property type="match status" value="1"/>
</dbReference>
<dbReference type="PANTHER" id="PTHR13693:SF100">
    <property type="entry name" value="8-AMINO-7-OXONONANOATE SYNTHASE"/>
    <property type="match status" value="1"/>
</dbReference>
<dbReference type="PANTHER" id="PTHR13693">
    <property type="entry name" value="CLASS II AMINOTRANSFERASE/8-AMINO-7-OXONONANOATE SYNTHASE"/>
    <property type="match status" value="1"/>
</dbReference>
<dbReference type="Pfam" id="PF00155">
    <property type="entry name" value="Aminotran_1_2"/>
    <property type="match status" value="1"/>
</dbReference>
<dbReference type="SUPFAM" id="SSF53383">
    <property type="entry name" value="PLP-dependent transferases"/>
    <property type="match status" value="1"/>
</dbReference>
<dbReference type="PROSITE" id="PS00599">
    <property type="entry name" value="AA_TRANSFER_CLASS_2"/>
    <property type="match status" value="1"/>
</dbReference>
<proteinExistence type="inferred from homology"/>
<name>BIOF_PECAS</name>
<gene>
    <name evidence="1" type="primary">bioF</name>
    <name type="ordered locus">ECA2824</name>
</gene>
<sequence length="385" mass="41986">MSWQQRIEAALVQRQHDDAYRVRQSNQGGSGRWLIQGDRCYLNFSSNDYLGLSHHPEIVRAWQQGAEQYGIGSGGSGHVTGYTDAHASLENQLADWLGYPRALLFISGYAANQAVVAALAQAEDRIFADKLSHASLLEAAAQSPATLRRFKHNQADSLQALLEKPTDGQTLVVTEGVFSMDGDTAPLPALQAQCRAHDAWLMVDDAHGIGVLGDEGRGSCWQQDIKPELLIVTFGKAFGVSGAAVLCTEPLAEYFLQFARHLIYSTSMPAAQACALSAAVNCVRQGGARRDALRRNIALFRAGFSNSSYQLMNSQSAIQPLIVGENARALALMNHLREQGVWVSAMRPPTVPPGSARLRITLTAEHQPEDINRLLTVLHHADRKL</sequence>